<dbReference type="EC" id="3.5.4.19" evidence="1"/>
<dbReference type="EMBL" id="CP001176">
    <property type="protein sequence ID" value="ACK63693.1"/>
    <property type="molecule type" value="Genomic_DNA"/>
</dbReference>
<dbReference type="RefSeq" id="WP_000803955.1">
    <property type="nucleotide sequence ID" value="NZ_VEHB01000003.1"/>
</dbReference>
<dbReference type="SMR" id="B7HHG6"/>
<dbReference type="KEGG" id="bcb:BCB4264_A1464"/>
<dbReference type="HOGENOM" id="CLU_048577_5_3_9"/>
<dbReference type="UniPathway" id="UPA00031">
    <property type="reaction ID" value="UER00008"/>
</dbReference>
<dbReference type="Proteomes" id="UP000007096">
    <property type="component" value="Chromosome"/>
</dbReference>
<dbReference type="GO" id="GO:0005737">
    <property type="term" value="C:cytoplasm"/>
    <property type="evidence" value="ECO:0007669"/>
    <property type="project" value="UniProtKB-SubCell"/>
</dbReference>
<dbReference type="GO" id="GO:0000287">
    <property type="term" value="F:magnesium ion binding"/>
    <property type="evidence" value="ECO:0007669"/>
    <property type="project" value="UniProtKB-UniRule"/>
</dbReference>
<dbReference type="GO" id="GO:0004635">
    <property type="term" value="F:phosphoribosyl-AMP cyclohydrolase activity"/>
    <property type="evidence" value="ECO:0007669"/>
    <property type="project" value="UniProtKB-UniRule"/>
</dbReference>
<dbReference type="GO" id="GO:0008270">
    <property type="term" value="F:zinc ion binding"/>
    <property type="evidence" value="ECO:0007669"/>
    <property type="project" value="UniProtKB-UniRule"/>
</dbReference>
<dbReference type="GO" id="GO:0000105">
    <property type="term" value="P:L-histidine biosynthetic process"/>
    <property type="evidence" value="ECO:0007669"/>
    <property type="project" value="UniProtKB-UniRule"/>
</dbReference>
<dbReference type="FunFam" id="3.10.20.810:FF:000001">
    <property type="entry name" value="Histidine biosynthesis bifunctional protein HisIE"/>
    <property type="match status" value="1"/>
</dbReference>
<dbReference type="Gene3D" id="3.10.20.810">
    <property type="entry name" value="Phosphoribosyl-AMP cyclohydrolase"/>
    <property type="match status" value="1"/>
</dbReference>
<dbReference type="HAMAP" id="MF_01021">
    <property type="entry name" value="HisI"/>
    <property type="match status" value="1"/>
</dbReference>
<dbReference type="InterPro" id="IPR026660">
    <property type="entry name" value="PRA-CH"/>
</dbReference>
<dbReference type="InterPro" id="IPR002496">
    <property type="entry name" value="PRib_AMP_CycHydrolase_dom"/>
</dbReference>
<dbReference type="InterPro" id="IPR038019">
    <property type="entry name" value="PRib_AMP_CycHydrolase_sf"/>
</dbReference>
<dbReference type="NCBIfam" id="NF000768">
    <property type="entry name" value="PRK00051.1"/>
    <property type="match status" value="1"/>
</dbReference>
<dbReference type="PANTHER" id="PTHR42945">
    <property type="entry name" value="HISTIDINE BIOSYNTHESIS BIFUNCTIONAL PROTEIN"/>
    <property type="match status" value="1"/>
</dbReference>
<dbReference type="PANTHER" id="PTHR42945:SF9">
    <property type="entry name" value="HISTIDINE BIOSYNTHESIS BIFUNCTIONAL PROTEIN HISIE"/>
    <property type="match status" value="1"/>
</dbReference>
<dbReference type="Pfam" id="PF01502">
    <property type="entry name" value="PRA-CH"/>
    <property type="match status" value="1"/>
</dbReference>
<dbReference type="SUPFAM" id="SSF141734">
    <property type="entry name" value="HisI-like"/>
    <property type="match status" value="1"/>
</dbReference>
<keyword id="KW-0028">Amino-acid biosynthesis</keyword>
<keyword id="KW-0963">Cytoplasm</keyword>
<keyword id="KW-0368">Histidine biosynthesis</keyword>
<keyword id="KW-0378">Hydrolase</keyword>
<keyword id="KW-0460">Magnesium</keyword>
<keyword id="KW-0479">Metal-binding</keyword>
<keyword id="KW-0862">Zinc</keyword>
<reference key="1">
    <citation type="submission" date="2008-10" db="EMBL/GenBank/DDBJ databases">
        <title>Genome sequence of Bacillus cereus B4264.</title>
        <authorList>
            <person name="Dodson R.J."/>
            <person name="Durkin A.S."/>
            <person name="Rosovitz M.J."/>
            <person name="Rasko D.A."/>
            <person name="Hoffmaster A."/>
            <person name="Ravel J."/>
            <person name="Sutton G."/>
        </authorList>
    </citation>
    <scope>NUCLEOTIDE SEQUENCE [LARGE SCALE GENOMIC DNA]</scope>
    <source>
        <strain>B4264</strain>
    </source>
</reference>
<evidence type="ECO:0000255" key="1">
    <source>
        <dbReference type="HAMAP-Rule" id="MF_01021"/>
    </source>
</evidence>
<accession>B7HHG6</accession>
<organism>
    <name type="scientific">Bacillus cereus (strain B4264)</name>
    <dbReference type="NCBI Taxonomy" id="405532"/>
    <lineage>
        <taxon>Bacteria</taxon>
        <taxon>Bacillati</taxon>
        <taxon>Bacillota</taxon>
        <taxon>Bacilli</taxon>
        <taxon>Bacillales</taxon>
        <taxon>Bacillaceae</taxon>
        <taxon>Bacillus</taxon>
        <taxon>Bacillus cereus group</taxon>
    </lineage>
</organism>
<sequence>MKPNFSKGLIPAIVIEEGTKDVLMLAYMNEEAYEKTLETKRTWFYSRSRQSLWNKGETSGNVQYVQSLYLDCDQDSIVVNVKQVGPACHTGEKTCFHYQII</sequence>
<feature type="chain" id="PRO_1000135332" description="Phosphoribosyl-AMP cyclohydrolase">
    <location>
        <begin position="1"/>
        <end position="101"/>
    </location>
</feature>
<feature type="binding site" evidence="1">
    <location>
        <position position="71"/>
    </location>
    <ligand>
        <name>Mg(2+)</name>
        <dbReference type="ChEBI" id="CHEBI:18420"/>
    </ligand>
</feature>
<feature type="binding site" evidence="1">
    <location>
        <position position="72"/>
    </location>
    <ligand>
        <name>Zn(2+)</name>
        <dbReference type="ChEBI" id="CHEBI:29105"/>
        <note>ligand shared between dimeric partners</note>
    </ligand>
</feature>
<feature type="binding site" evidence="1">
    <location>
        <position position="73"/>
    </location>
    <ligand>
        <name>Mg(2+)</name>
        <dbReference type="ChEBI" id="CHEBI:18420"/>
    </ligand>
</feature>
<feature type="binding site" evidence="1">
    <location>
        <position position="75"/>
    </location>
    <ligand>
        <name>Mg(2+)</name>
        <dbReference type="ChEBI" id="CHEBI:18420"/>
    </ligand>
</feature>
<feature type="binding site" evidence="1">
    <location>
        <position position="88"/>
    </location>
    <ligand>
        <name>Zn(2+)</name>
        <dbReference type="ChEBI" id="CHEBI:29105"/>
        <note>ligand shared between dimeric partners</note>
    </ligand>
</feature>
<feature type="binding site" evidence="1">
    <location>
        <position position="95"/>
    </location>
    <ligand>
        <name>Zn(2+)</name>
        <dbReference type="ChEBI" id="CHEBI:29105"/>
        <note>ligand shared between dimeric partners</note>
    </ligand>
</feature>
<gene>
    <name evidence="1" type="primary">hisI</name>
    <name type="ordered locus">BCB4264_A1464</name>
</gene>
<comment type="function">
    <text evidence="1">Catalyzes the hydrolysis of the adenine ring of phosphoribosyl-AMP.</text>
</comment>
<comment type="catalytic activity">
    <reaction evidence="1">
        <text>1-(5-phospho-beta-D-ribosyl)-5'-AMP + H2O = 1-(5-phospho-beta-D-ribosyl)-5-[(5-phospho-beta-D-ribosylamino)methylideneamino]imidazole-4-carboxamide</text>
        <dbReference type="Rhea" id="RHEA:20049"/>
        <dbReference type="ChEBI" id="CHEBI:15377"/>
        <dbReference type="ChEBI" id="CHEBI:58435"/>
        <dbReference type="ChEBI" id="CHEBI:59457"/>
        <dbReference type="EC" id="3.5.4.19"/>
    </reaction>
</comment>
<comment type="cofactor">
    <cofactor evidence="1">
        <name>Mg(2+)</name>
        <dbReference type="ChEBI" id="CHEBI:18420"/>
    </cofactor>
    <text evidence="1">Binds 1 Mg(2+) ion per subunit.</text>
</comment>
<comment type="cofactor">
    <cofactor evidence="1">
        <name>Zn(2+)</name>
        <dbReference type="ChEBI" id="CHEBI:29105"/>
    </cofactor>
    <text evidence="1">Binds 1 zinc ion per subunit.</text>
</comment>
<comment type="pathway">
    <text evidence="1">Amino-acid biosynthesis; L-histidine biosynthesis; L-histidine from 5-phospho-alpha-D-ribose 1-diphosphate: step 3/9.</text>
</comment>
<comment type="subunit">
    <text evidence="1">Homodimer.</text>
</comment>
<comment type="subcellular location">
    <subcellularLocation>
        <location evidence="1">Cytoplasm</location>
    </subcellularLocation>
</comment>
<comment type="similarity">
    <text evidence="1">Belongs to the PRA-CH family.</text>
</comment>
<name>HIS3_BACC4</name>
<protein>
    <recommendedName>
        <fullName evidence="1">Phosphoribosyl-AMP cyclohydrolase</fullName>
        <shortName evidence="1">PRA-CH</shortName>
        <ecNumber evidence="1">3.5.4.19</ecNumber>
    </recommendedName>
</protein>
<proteinExistence type="inferred from homology"/>